<sequence length="127" mass="13172">MSYKPIAPAPSSTPGSSTPGPGTPVPTAGSVPSPSGSVPGAAGPFRPLFNDFGPPSMGYVQAMKPPGAQGSQSTYTDLLSVIEEMGKEIRPTYAGSKSAMERLKRGIIHARALVRECLAETERNART</sequence>
<protein>
    <recommendedName>
        <fullName>Cyclin-dependent kinase 2-associated protein 2</fullName>
        <shortName>CDK2-associated protein 2</shortName>
    </recommendedName>
    <alternativeName>
        <fullName>DOC-1-related protein</fullName>
        <shortName>DOC-1R</shortName>
    </alternativeName>
</protein>
<gene>
    <name type="primary">CDK2AP2</name>
    <name type="synonym">DOC1R</name>
</gene>
<accession>Q58CN7</accession>
<organism>
    <name type="scientific">Bos taurus</name>
    <name type="common">Bovine</name>
    <dbReference type="NCBI Taxonomy" id="9913"/>
    <lineage>
        <taxon>Eukaryota</taxon>
        <taxon>Metazoa</taxon>
        <taxon>Chordata</taxon>
        <taxon>Craniata</taxon>
        <taxon>Vertebrata</taxon>
        <taxon>Euteleostomi</taxon>
        <taxon>Mammalia</taxon>
        <taxon>Eutheria</taxon>
        <taxon>Laurasiatheria</taxon>
        <taxon>Artiodactyla</taxon>
        <taxon>Ruminantia</taxon>
        <taxon>Pecora</taxon>
        <taxon>Bovidae</taxon>
        <taxon>Bovinae</taxon>
        <taxon>Bos</taxon>
    </lineage>
</organism>
<feature type="chain" id="PRO_0000079962" description="Cyclin-dependent kinase 2-associated protein 2">
    <location>
        <begin position="1"/>
        <end position="127"/>
    </location>
</feature>
<feature type="region of interest" description="Disordered" evidence="3">
    <location>
        <begin position="1"/>
        <end position="49"/>
    </location>
</feature>
<feature type="region of interest" description="Interaction with CDK2" evidence="1">
    <location>
        <begin position="65"/>
        <end position="107"/>
    </location>
</feature>
<feature type="compositionally biased region" description="Low complexity" evidence="3">
    <location>
        <begin position="9"/>
        <end position="44"/>
    </location>
</feature>
<comment type="function">
    <text evidence="1 2">Acts as a component of the histone deacetylase NuRD complex which participates in the remodeling of chromatin (By similarity). Inhibits cell cycle G1/S phase transition by repressing CDK2 expression and activation; represses CDK2 activation by inhibiting its interaction with cyclin E and A (By similarity). Plays a role in regulating the self-renewal of embryonic stem cells (ESCs) and in maintaining cell survival during terminal differentiation of ESCs (By similarity). Regulates microtubule organization of metaphase II oocytes (By similarity).</text>
</comment>
<comment type="subunit">
    <text evidence="1 2">Component of the nucleosome remodeling and deacetylase (NuRD) repressor complex, composed of core proteins MTA1, MTA2, MTA3, RBBP4, RBBP7, HDAC1, HDAC2, MBD2, MBD3, and peripherally associated proteins CDK2AP1, CDK2AP2, GATAD2A, GATAD2B, CHD3, CHD4 and CHD5 (By similarity). The exact stoichiometry of the NuRD complex is unknown, and some subunits such as MBD2 and MBD3, GATAD2A and GATAD2B, and CHD3, CHD4 and CHD5 define mutually exclusive NuRD complexes (By similarity). Interacts with CDK2AP1 (By similarity). Interacts with CDK2 (By similarity). Interacts with MAPK1 (By similarity).</text>
</comment>
<comment type="subcellular location">
    <subcellularLocation>
        <location evidence="2">Cytoplasm</location>
    </subcellularLocation>
    <subcellularLocation>
        <location evidence="2">Nucleus</location>
    </subcellularLocation>
    <text evidence="2">Accumulates in immature oocytes in the nucleus. During the first meiotic division, accumulates in the cytoplasm and localizes in dots in the vicinity of the chromosomes in a region enriched in microtubules.</text>
</comment>
<comment type="PTM">
    <text evidence="2">Phosphorylated by MAPK1 and CDK2.</text>
</comment>
<comment type="similarity">
    <text evidence="4">Belongs to the CDK2AP family.</text>
</comment>
<keyword id="KW-0963">Cytoplasm</keyword>
<keyword id="KW-0539">Nucleus</keyword>
<keyword id="KW-0597">Phosphoprotein</keyword>
<keyword id="KW-1185">Reference proteome</keyword>
<dbReference type="EMBL" id="BT021910">
    <property type="protein sequence ID" value="AAX46757.1"/>
    <property type="molecule type" value="mRNA"/>
</dbReference>
<dbReference type="RefSeq" id="NP_001030397.1">
    <property type="nucleotide sequence ID" value="NM_001035320.1"/>
</dbReference>
<dbReference type="BMRB" id="Q58CN7"/>
<dbReference type="SMR" id="Q58CN7"/>
<dbReference type="FunCoup" id="Q58CN7">
    <property type="interactions" value="1042"/>
</dbReference>
<dbReference type="STRING" id="9913.ENSBTAP00000002738"/>
<dbReference type="PaxDb" id="9913-ENSBTAP00000002738"/>
<dbReference type="GeneID" id="517206"/>
<dbReference type="KEGG" id="bta:517206"/>
<dbReference type="CTD" id="10263"/>
<dbReference type="VEuPathDB" id="HostDB:ENSBTAG00000002121"/>
<dbReference type="eggNOG" id="KOG4713">
    <property type="taxonomic scope" value="Eukaryota"/>
</dbReference>
<dbReference type="HOGENOM" id="CLU_130479_0_0_1"/>
<dbReference type="InParanoid" id="Q58CN7"/>
<dbReference type="OMA" id="AHVTPKI"/>
<dbReference type="OrthoDB" id="9628807at2759"/>
<dbReference type="TreeFam" id="TF101037"/>
<dbReference type="Proteomes" id="UP000009136">
    <property type="component" value="Chromosome 29"/>
</dbReference>
<dbReference type="Bgee" id="ENSBTAG00000002121">
    <property type="expression patterns" value="Expressed in oocyte and 106 other cell types or tissues"/>
</dbReference>
<dbReference type="GO" id="GO:0005737">
    <property type="term" value="C:cytoplasm"/>
    <property type="evidence" value="ECO:0000250"/>
    <property type="project" value="UniProtKB"/>
</dbReference>
<dbReference type="GO" id="GO:0005874">
    <property type="term" value="C:microtubule"/>
    <property type="evidence" value="ECO:0000250"/>
    <property type="project" value="UniProtKB"/>
</dbReference>
<dbReference type="GO" id="GO:0005634">
    <property type="term" value="C:nucleus"/>
    <property type="evidence" value="ECO:0000250"/>
    <property type="project" value="UniProtKB"/>
</dbReference>
<dbReference type="GO" id="GO:0016581">
    <property type="term" value="C:NuRD complex"/>
    <property type="evidence" value="ECO:0000250"/>
    <property type="project" value="UniProtKB"/>
</dbReference>
<dbReference type="GO" id="GO:2000134">
    <property type="term" value="P:negative regulation of G1/S transition of mitotic cell cycle"/>
    <property type="evidence" value="ECO:0000250"/>
    <property type="project" value="UniProtKB"/>
</dbReference>
<dbReference type="GO" id="GO:0070507">
    <property type="term" value="P:regulation of microtubule cytoskeleton organization"/>
    <property type="evidence" value="ECO:0000250"/>
    <property type="project" value="UniProtKB"/>
</dbReference>
<dbReference type="GO" id="GO:2000035">
    <property type="term" value="P:regulation of stem cell division"/>
    <property type="evidence" value="ECO:0000250"/>
    <property type="project" value="UniProtKB"/>
</dbReference>
<dbReference type="Gene3D" id="6.10.140.1300">
    <property type="match status" value="1"/>
</dbReference>
<dbReference type="InterPro" id="IPR017266">
    <property type="entry name" value="DOC_1/2"/>
</dbReference>
<dbReference type="PANTHER" id="PTHR22607:SF4">
    <property type="entry name" value="CYCLIN-DEPENDENT KINASE 2-ASSOCIATED PROTEIN 2"/>
    <property type="match status" value="1"/>
</dbReference>
<dbReference type="PANTHER" id="PTHR22607">
    <property type="entry name" value="DELETED IN ORAL CANCER 1/CDK2-ASSOCIATED PROTEIN 1"/>
    <property type="match status" value="1"/>
</dbReference>
<dbReference type="Pfam" id="PF09806">
    <property type="entry name" value="CDK2AP"/>
    <property type="match status" value="1"/>
</dbReference>
<dbReference type="PIRSF" id="PIRSF037709">
    <property type="entry name" value="CDK2-associated_p2"/>
    <property type="match status" value="1"/>
</dbReference>
<evidence type="ECO:0000250" key="1">
    <source>
        <dbReference type="UniProtKB" id="O75956"/>
    </source>
</evidence>
<evidence type="ECO:0000250" key="2">
    <source>
        <dbReference type="UniProtKB" id="Q9CPY4"/>
    </source>
</evidence>
<evidence type="ECO:0000256" key="3">
    <source>
        <dbReference type="SAM" id="MobiDB-lite"/>
    </source>
</evidence>
<evidence type="ECO:0000305" key="4"/>
<name>CDKA2_BOVIN</name>
<reference key="1">
    <citation type="journal article" date="2005" name="BMC Genomics">
        <title>Characterization of 954 bovine full-CDS cDNA sequences.</title>
        <authorList>
            <person name="Harhay G.P."/>
            <person name="Sonstegard T.S."/>
            <person name="Keele J.W."/>
            <person name="Heaton M.P."/>
            <person name="Clawson M.L."/>
            <person name="Snelling W.M."/>
            <person name="Wiedmann R.T."/>
            <person name="Van Tassell C.P."/>
            <person name="Smith T.P.L."/>
        </authorList>
    </citation>
    <scope>NUCLEOTIDE SEQUENCE [LARGE SCALE MRNA]</scope>
</reference>
<proteinExistence type="evidence at transcript level"/>